<sequence length="360" mass="40350">MSELETLERTLLADIDAAADEGAIEALRVGALGKKGSISELLKTLGTMSPEERQTRGARINALKNIVTEAISARKLALKDAAIAERLARETVDISLPVRSSPAERGRIHPISQIVDEITAIFGDMGFSIAEGPDIETDYYNFTALNFPEGHPAREMHDTFFFQPDENGERKVLRTHTSPVQIRTMEAEKPPIRIIIPGKTYRQDSDATHSPMFHQVEGLVIDKTANVANMRWVLEEFCKAFFEVDQVTMRFRPSFFPFTEPSFEVDIQCDRSGPIVKFGEGKDWMEILGCGMVHPNVLRAGGLDPDEYQGFAWGMGLDRIAMLKYGMPDLRDFFNADVRWMTHYGFRPLDMPTLFGGLSA</sequence>
<reference key="1">
    <citation type="journal article" date="2009" name="Appl. Environ. Microbiol.">
        <title>Rhizobium sp. strain NGR234 possesses a remarkable number of secretion systems.</title>
        <authorList>
            <person name="Schmeisser C."/>
            <person name="Liesegang H."/>
            <person name="Krysciak D."/>
            <person name="Bakkou N."/>
            <person name="Le Quere A."/>
            <person name="Wollherr A."/>
            <person name="Heinemeyer I."/>
            <person name="Morgenstern B."/>
            <person name="Pommerening-Roeser A."/>
            <person name="Flores M."/>
            <person name="Palacios R."/>
            <person name="Brenner S."/>
            <person name="Gottschalk G."/>
            <person name="Schmitz R.A."/>
            <person name="Broughton W.J."/>
            <person name="Perret X."/>
            <person name="Strittmatter A.W."/>
            <person name="Streit W.R."/>
        </authorList>
    </citation>
    <scope>NUCLEOTIDE SEQUENCE [LARGE SCALE GENOMIC DNA]</scope>
    <source>
        <strain>NBRC 101917 / NGR234</strain>
    </source>
</reference>
<gene>
    <name evidence="1" type="primary">pheS</name>
    <name type="ordered locus">NGR_c36270</name>
</gene>
<feature type="chain" id="PRO_1000199321" description="Phenylalanine--tRNA ligase alpha subunit">
    <location>
        <begin position="1"/>
        <end position="360"/>
    </location>
</feature>
<feature type="binding site" evidence="1">
    <location>
        <position position="260"/>
    </location>
    <ligand>
        <name>Mg(2+)</name>
        <dbReference type="ChEBI" id="CHEBI:18420"/>
        <note>shared with beta subunit</note>
    </ligand>
</feature>
<name>SYFA_SINFN</name>
<comment type="catalytic activity">
    <reaction evidence="1">
        <text>tRNA(Phe) + L-phenylalanine + ATP = L-phenylalanyl-tRNA(Phe) + AMP + diphosphate + H(+)</text>
        <dbReference type="Rhea" id="RHEA:19413"/>
        <dbReference type="Rhea" id="RHEA-COMP:9668"/>
        <dbReference type="Rhea" id="RHEA-COMP:9699"/>
        <dbReference type="ChEBI" id="CHEBI:15378"/>
        <dbReference type="ChEBI" id="CHEBI:30616"/>
        <dbReference type="ChEBI" id="CHEBI:33019"/>
        <dbReference type="ChEBI" id="CHEBI:58095"/>
        <dbReference type="ChEBI" id="CHEBI:78442"/>
        <dbReference type="ChEBI" id="CHEBI:78531"/>
        <dbReference type="ChEBI" id="CHEBI:456215"/>
        <dbReference type="EC" id="6.1.1.20"/>
    </reaction>
</comment>
<comment type="cofactor">
    <cofactor evidence="1">
        <name>Mg(2+)</name>
        <dbReference type="ChEBI" id="CHEBI:18420"/>
    </cofactor>
    <text evidence="1">Binds 2 magnesium ions per tetramer.</text>
</comment>
<comment type="subunit">
    <text evidence="1">Tetramer of two alpha and two beta subunits.</text>
</comment>
<comment type="subcellular location">
    <subcellularLocation>
        <location evidence="1">Cytoplasm</location>
    </subcellularLocation>
</comment>
<comment type="similarity">
    <text evidence="1">Belongs to the class-II aminoacyl-tRNA synthetase family. Phe-tRNA synthetase alpha subunit type 1 subfamily.</text>
</comment>
<accession>C3MCQ0</accession>
<evidence type="ECO:0000255" key="1">
    <source>
        <dbReference type="HAMAP-Rule" id="MF_00281"/>
    </source>
</evidence>
<organism>
    <name type="scientific">Sinorhizobium fredii (strain NBRC 101917 / NGR234)</name>
    <dbReference type="NCBI Taxonomy" id="394"/>
    <lineage>
        <taxon>Bacteria</taxon>
        <taxon>Pseudomonadati</taxon>
        <taxon>Pseudomonadota</taxon>
        <taxon>Alphaproteobacteria</taxon>
        <taxon>Hyphomicrobiales</taxon>
        <taxon>Rhizobiaceae</taxon>
        <taxon>Sinorhizobium/Ensifer group</taxon>
        <taxon>Sinorhizobium</taxon>
    </lineage>
</organism>
<protein>
    <recommendedName>
        <fullName evidence="1">Phenylalanine--tRNA ligase alpha subunit</fullName>
        <ecNumber evidence="1">6.1.1.20</ecNumber>
    </recommendedName>
    <alternativeName>
        <fullName evidence="1">Phenylalanyl-tRNA synthetase alpha subunit</fullName>
        <shortName evidence="1">PheRS</shortName>
    </alternativeName>
</protein>
<dbReference type="EC" id="6.1.1.20" evidence="1"/>
<dbReference type="EMBL" id="CP001389">
    <property type="protein sequence ID" value="ACP27348.1"/>
    <property type="molecule type" value="Genomic_DNA"/>
</dbReference>
<dbReference type="RefSeq" id="WP_012710092.1">
    <property type="nucleotide sequence ID" value="NC_012587.1"/>
</dbReference>
<dbReference type="RefSeq" id="YP_002828101.1">
    <property type="nucleotide sequence ID" value="NC_012587.1"/>
</dbReference>
<dbReference type="SMR" id="C3MCQ0"/>
<dbReference type="STRING" id="394.NGR_c36270"/>
<dbReference type="KEGG" id="rhi:NGR_c36270"/>
<dbReference type="PATRIC" id="fig|394.7.peg.6479"/>
<dbReference type="eggNOG" id="COG0016">
    <property type="taxonomic scope" value="Bacteria"/>
</dbReference>
<dbReference type="HOGENOM" id="CLU_025086_0_1_5"/>
<dbReference type="OrthoDB" id="9800719at2"/>
<dbReference type="Proteomes" id="UP000001054">
    <property type="component" value="Chromosome"/>
</dbReference>
<dbReference type="GO" id="GO:0005737">
    <property type="term" value="C:cytoplasm"/>
    <property type="evidence" value="ECO:0007669"/>
    <property type="project" value="UniProtKB-SubCell"/>
</dbReference>
<dbReference type="GO" id="GO:0005524">
    <property type="term" value="F:ATP binding"/>
    <property type="evidence" value="ECO:0007669"/>
    <property type="project" value="UniProtKB-UniRule"/>
</dbReference>
<dbReference type="GO" id="GO:0000287">
    <property type="term" value="F:magnesium ion binding"/>
    <property type="evidence" value="ECO:0007669"/>
    <property type="project" value="UniProtKB-UniRule"/>
</dbReference>
<dbReference type="GO" id="GO:0004826">
    <property type="term" value="F:phenylalanine-tRNA ligase activity"/>
    <property type="evidence" value="ECO:0007669"/>
    <property type="project" value="UniProtKB-UniRule"/>
</dbReference>
<dbReference type="GO" id="GO:0000049">
    <property type="term" value="F:tRNA binding"/>
    <property type="evidence" value="ECO:0007669"/>
    <property type="project" value="InterPro"/>
</dbReference>
<dbReference type="GO" id="GO:0006432">
    <property type="term" value="P:phenylalanyl-tRNA aminoacylation"/>
    <property type="evidence" value="ECO:0007669"/>
    <property type="project" value="UniProtKB-UniRule"/>
</dbReference>
<dbReference type="CDD" id="cd00496">
    <property type="entry name" value="PheRS_alpha_core"/>
    <property type="match status" value="1"/>
</dbReference>
<dbReference type="FunFam" id="3.30.930.10:FF:000003">
    <property type="entry name" value="Phenylalanine--tRNA ligase alpha subunit"/>
    <property type="match status" value="1"/>
</dbReference>
<dbReference type="Gene3D" id="3.30.930.10">
    <property type="entry name" value="Bira Bifunctional Protein, Domain 2"/>
    <property type="match status" value="1"/>
</dbReference>
<dbReference type="HAMAP" id="MF_00281">
    <property type="entry name" value="Phe_tRNA_synth_alpha1"/>
    <property type="match status" value="1"/>
</dbReference>
<dbReference type="InterPro" id="IPR006195">
    <property type="entry name" value="aa-tRNA-synth_II"/>
</dbReference>
<dbReference type="InterPro" id="IPR045864">
    <property type="entry name" value="aa-tRNA-synth_II/BPL/LPL"/>
</dbReference>
<dbReference type="InterPro" id="IPR004529">
    <property type="entry name" value="Phe-tRNA-synth_IIc_asu"/>
</dbReference>
<dbReference type="InterPro" id="IPR004188">
    <property type="entry name" value="Phe-tRNA_ligase_II_N"/>
</dbReference>
<dbReference type="InterPro" id="IPR022911">
    <property type="entry name" value="Phe_tRNA_ligase_alpha1_bac"/>
</dbReference>
<dbReference type="InterPro" id="IPR002319">
    <property type="entry name" value="Phenylalanyl-tRNA_Synthase"/>
</dbReference>
<dbReference type="InterPro" id="IPR010978">
    <property type="entry name" value="tRNA-bd_arm"/>
</dbReference>
<dbReference type="NCBIfam" id="TIGR00468">
    <property type="entry name" value="pheS"/>
    <property type="match status" value="1"/>
</dbReference>
<dbReference type="PANTHER" id="PTHR11538:SF41">
    <property type="entry name" value="PHENYLALANINE--TRNA LIGASE, MITOCHONDRIAL"/>
    <property type="match status" value="1"/>
</dbReference>
<dbReference type="PANTHER" id="PTHR11538">
    <property type="entry name" value="PHENYLALANYL-TRNA SYNTHETASE"/>
    <property type="match status" value="1"/>
</dbReference>
<dbReference type="Pfam" id="PF02912">
    <property type="entry name" value="Phe_tRNA-synt_N"/>
    <property type="match status" value="1"/>
</dbReference>
<dbReference type="Pfam" id="PF01409">
    <property type="entry name" value="tRNA-synt_2d"/>
    <property type="match status" value="1"/>
</dbReference>
<dbReference type="SUPFAM" id="SSF55681">
    <property type="entry name" value="Class II aaRS and biotin synthetases"/>
    <property type="match status" value="1"/>
</dbReference>
<dbReference type="SUPFAM" id="SSF46589">
    <property type="entry name" value="tRNA-binding arm"/>
    <property type="match status" value="1"/>
</dbReference>
<dbReference type="PROSITE" id="PS50862">
    <property type="entry name" value="AA_TRNA_LIGASE_II"/>
    <property type="match status" value="1"/>
</dbReference>
<keyword id="KW-0030">Aminoacyl-tRNA synthetase</keyword>
<keyword id="KW-0067">ATP-binding</keyword>
<keyword id="KW-0963">Cytoplasm</keyword>
<keyword id="KW-0436">Ligase</keyword>
<keyword id="KW-0460">Magnesium</keyword>
<keyword id="KW-0479">Metal-binding</keyword>
<keyword id="KW-0547">Nucleotide-binding</keyword>
<keyword id="KW-0648">Protein biosynthesis</keyword>
<keyword id="KW-1185">Reference proteome</keyword>
<proteinExistence type="inferred from homology"/>